<sequence>MSLIEIDGSYGEGGGQILRTAVGMSALTGEPVRIYNIRANRPRPGLSHQHLHAVKAVAEICDAECEGLEIGSTEIVFEPGKVKGGEYEVDIGTAGSVTLLLQAVKLAAIAADGPVEMEVRGGTDVKWSPPVDYEINVNAHYLDRLGYRYELEVLRRGHYPRGGGIVRARMEPPKRLKPLEAVKFGELESVRGISHCVRLPPHVAERQAKAASEIIERELGIRPEIEIETYPKGRDPHLGPGSGIVLWAEDDQGNRIGADALGEKGKPAEVVGREAAEQLVQRLRTGMALDEHMGDQILPFLAIADGESVFGVTGVDPHLPTNAWVVEKFLPVSVEIRGKEGEPATVEVRPEG</sequence>
<reference key="1">
    <citation type="journal article" date="2002" name="Proc. Natl. Acad. Sci. U.S.A.">
        <title>The complete genome of hyperthermophile Methanopyrus kandleri AV19 and monophyly of archaeal methanogens.</title>
        <authorList>
            <person name="Slesarev A.I."/>
            <person name="Mezhevaya K.V."/>
            <person name="Makarova K.S."/>
            <person name="Polushin N.N."/>
            <person name="Shcherbinina O.V."/>
            <person name="Shakhova V.V."/>
            <person name="Belova G.I."/>
            <person name="Aravind L."/>
            <person name="Natale D.A."/>
            <person name="Rogozin I.B."/>
            <person name="Tatusov R.L."/>
            <person name="Wolf Y.I."/>
            <person name="Stetter K.O."/>
            <person name="Malykh A.G."/>
            <person name="Koonin E.V."/>
            <person name="Kozyavkin S.A."/>
        </authorList>
    </citation>
    <scope>NUCLEOTIDE SEQUENCE [LARGE SCALE GENOMIC DNA]</scope>
    <source>
        <strain>AV19 / DSM 6324 / JCM 9639 / NBRC 100938</strain>
    </source>
</reference>
<comment type="function">
    <text evidence="1">Catalyzes the conversion of 3'-phosphate to a 2',3'-cyclic phosphodiester at the end of RNA. The mechanism of action of the enzyme occurs in 3 steps: (A) adenylation of the enzyme by ATP; (B) transfer of adenylate to an RNA-N3'P to produce RNA-N3'PP5'A; (C) and attack of the adjacent 2'-hydroxyl on the 3'-phosphorus in the diester linkage to produce the cyclic end product. The biological role of this enzyme is unknown but it is likely to function in some aspects of cellular RNA processing.</text>
</comment>
<comment type="catalytic activity">
    <reaction evidence="1">
        <text>a 3'-end 3'-phospho-ribonucleotide-RNA + ATP = a 3'-end 2',3'-cyclophospho-ribonucleotide-RNA + AMP + diphosphate</text>
        <dbReference type="Rhea" id="RHEA:23976"/>
        <dbReference type="Rhea" id="RHEA-COMP:10463"/>
        <dbReference type="Rhea" id="RHEA-COMP:10464"/>
        <dbReference type="ChEBI" id="CHEBI:30616"/>
        <dbReference type="ChEBI" id="CHEBI:33019"/>
        <dbReference type="ChEBI" id="CHEBI:83062"/>
        <dbReference type="ChEBI" id="CHEBI:83064"/>
        <dbReference type="ChEBI" id="CHEBI:456215"/>
        <dbReference type="EC" id="6.5.1.4"/>
    </reaction>
</comment>
<comment type="subcellular location">
    <subcellularLocation>
        <location evidence="1">Cytoplasm</location>
    </subcellularLocation>
</comment>
<comment type="similarity">
    <text evidence="1">Belongs to the RNA 3'-terminal cyclase family. Type 1 subfamily.</text>
</comment>
<protein>
    <recommendedName>
        <fullName evidence="1">RNA 3'-terminal phosphate cyclase</fullName>
        <shortName evidence="1">RNA cyclase</shortName>
        <shortName evidence="1">RNA-3'-phosphate cyclase</shortName>
        <ecNumber evidence="1">6.5.1.4</ecNumber>
    </recommendedName>
</protein>
<feature type="chain" id="PRO_0000156427" description="RNA 3'-terminal phosphate cyclase">
    <location>
        <begin position="1"/>
        <end position="352"/>
    </location>
</feature>
<feature type="active site" description="Tele-AMP-histidine intermediate" evidence="1">
    <location>
        <position position="318"/>
    </location>
</feature>
<feature type="binding site" evidence="1">
    <location>
        <position position="102"/>
    </location>
    <ligand>
        <name>ATP</name>
        <dbReference type="ChEBI" id="CHEBI:30616"/>
    </ligand>
</feature>
<feature type="binding site" evidence="1">
    <location>
        <begin position="292"/>
        <end position="296"/>
    </location>
    <ligand>
        <name>ATP</name>
        <dbReference type="ChEBI" id="CHEBI:30616"/>
    </ligand>
</feature>
<organism>
    <name type="scientific">Methanopyrus kandleri (strain AV19 / DSM 6324 / JCM 9639 / NBRC 100938)</name>
    <dbReference type="NCBI Taxonomy" id="190192"/>
    <lineage>
        <taxon>Archaea</taxon>
        <taxon>Methanobacteriati</taxon>
        <taxon>Methanobacteriota</taxon>
        <taxon>Methanomada group</taxon>
        <taxon>Methanopyri</taxon>
        <taxon>Methanopyrales</taxon>
        <taxon>Methanopyraceae</taxon>
        <taxon>Methanopyrus</taxon>
    </lineage>
</organism>
<accession>Q8TZC9</accession>
<evidence type="ECO:0000255" key="1">
    <source>
        <dbReference type="HAMAP-Rule" id="MF_00200"/>
    </source>
</evidence>
<keyword id="KW-0067">ATP-binding</keyword>
<keyword id="KW-0963">Cytoplasm</keyword>
<keyword id="KW-0436">Ligase</keyword>
<keyword id="KW-0547">Nucleotide-binding</keyword>
<keyword id="KW-1185">Reference proteome</keyword>
<gene>
    <name evidence="1" type="primary">rtcA</name>
    <name type="ordered locus">MK0001</name>
</gene>
<name>RTCA_METKA</name>
<proteinExistence type="inferred from homology"/>
<dbReference type="EC" id="6.5.1.4" evidence="1"/>
<dbReference type="EMBL" id="AE009439">
    <property type="protein sequence ID" value="AAM01218.1"/>
    <property type="molecule type" value="Genomic_DNA"/>
</dbReference>
<dbReference type="RefSeq" id="WP_011018373.1">
    <property type="nucleotide sequence ID" value="NC_003551.1"/>
</dbReference>
<dbReference type="SMR" id="Q8TZC9"/>
<dbReference type="FunCoup" id="Q8TZC9">
    <property type="interactions" value="141"/>
</dbReference>
<dbReference type="STRING" id="190192.MK0001"/>
<dbReference type="PaxDb" id="190192-MK0001"/>
<dbReference type="EnsemblBacteria" id="AAM01218">
    <property type="protein sequence ID" value="AAM01218"/>
    <property type="gene ID" value="MK0001"/>
</dbReference>
<dbReference type="GeneID" id="1477327"/>
<dbReference type="KEGG" id="mka:MK0001"/>
<dbReference type="PATRIC" id="fig|190192.8.peg.1"/>
<dbReference type="HOGENOM" id="CLU_027882_0_0_2"/>
<dbReference type="InParanoid" id="Q8TZC9"/>
<dbReference type="OrthoDB" id="7994at2157"/>
<dbReference type="Proteomes" id="UP000001826">
    <property type="component" value="Chromosome"/>
</dbReference>
<dbReference type="GO" id="GO:0005737">
    <property type="term" value="C:cytoplasm"/>
    <property type="evidence" value="ECO:0007669"/>
    <property type="project" value="UniProtKB-SubCell"/>
</dbReference>
<dbReference type="GO" id="GO:0005524">
    <property type="term" value="F:ATP binding"/>
    <property type="evidence" value="ECO:0007669"/>
    <property type="project" value="UniProtKB-KW"/>
</dbReference>
<dbReference type="GO" id="GO:0003963">
    <property type="term" value="F:RNA-3'-phosphate cyclase activity"/>
    <property type="evidence" value="ECO:0007669"/>
    <property type="project" value="UniProtKB-UniRule"/>
</dbReference>
<dbReference type="GO" id="GO:0006396">
    <property type="term" value="P:RNA processing"/>
    <property type="evidence" value="ECO:0007669"/>
    <property type="project" value="InterPro"/>
</dbReference>
<dbReference type="CDD" id="cd00874">
    <property type="entry name" value="RNA_Cyclase_Class_II"/>
    <property type="match status" value="1"/>
</dbReference>
<dbReference type="FunFam" id="3.30.360.20:FF:000002">
    <property type="entry name" value="RNA terminal phosphate cyclase-like 1"/>
    <property type="match status" value="1"/>
</dbReference>
<dbReference type="Gene3D" id="3.65.10.20">
    <property type="entry name" value="RNA 3'-terminal phosphate cyclase domain"/>
    <property type="match status" value="1"/>
</dbReference>
<dbReference type="Gene3D" id="3.30.360.20">
    <property type="entry name" value="RNA 3'-terminal phosphate cyclase, insert domain"/>
    <property type="match status" value="1"/>
</dbReference>
<dbReference type="HAMAP" id="MF_00200">
    <property type="entry name" value="RTC"/>
    <property type="match status" value="1"/>
</dbReference>
<dbReference type="InterPro" id="IPR013791">
    <property type="entry name" value="RNA3'-term_phos_cycl_insert"/>
</dbReference>
<dbReference type="InterPro" id="IPR023797">
    <property type="entry name" value="RNA3'_phos_cyclase_dom"/>
</dbReference>
<dbReference type="InterPro" id="IPR037136">
    <property type="entry name" value="RNA3'_phos_cyclase_dom_sf"/>
</dbReference>
<dbReference type="InterPro" id="IPR000228">
    <property type="entry name" value="RNA3'_term_phos_cyc"/>
</dbReference>
<dbReference type="InterPro" id="IPR017770">
    <property type="entry name" value="RNA3'_term_phos_cyc_type_1"/>
</dbReference>
<dbReference type="InterPro" id="IPR020719">
    <property type="entry name" value="RNA3'_term_phos_cycl-like_CS"/>
</dbReference>
<dbReference type="InterPro" id="IPR013792">
    <property type="entry name" value="RNA3'P_cycl/enolpyr_Trfase_a/b"/>
</dbReference>
<dbReference type="InterPro" id="IPR036553">
    <property type="entry name" value="RPTC_insert"/>
</dbReference>
<dbReference type="NCBIfam" id="NF003246">
    <property type="entry name" value="PRK04204.1-2"/>
    <property type="match status" value="1"/>
</dbReference>
<dbReference type="NCBIfam" id="TIGR03399">
    <property type="entry name" value="RNA_3prim_cycl"/>
    <property type="match status" value="1"/>
</dbReference>
<dbReference type="PANTHER" id="PTHR11096">
    <property type="entry name" value="RNA 3' TERMINAL PHOSPHATE CYCLASE"/>
    <property type="match status" value="1"/>
</dbReference>
<dbReference type="PANTHER" id="PTHR11096:SF0">
    <property type="entry name" value="RNA 3'-TERMINAL PHOSPHATE CYCLASE"/>
    <property type="match status" value="1"/>
</dbReference>
<dbReference type="Pfam" id="PF01137">
    <property type="entry name" value="RTC"/>
    <property type="match status" value="1"/>
</dbReference>
<dbReference type="Pfam" id="PF05189">
    <property type="entry name" value="RTC_insert"/>
    <property type="match status" value="1"/>
</dbReference>
<dbReference type="PIRSF" id="PIRSF005378">
    <property type="entry name" value="RNA3'_term_phos_cycl_euk"/>
    <property type="match status" value="1"/>
</dbReference>
<dbReference type="SUPFAM" id="SSF55205">
    <property type="entry name" value="EPT/RTPC-like"/>
    <property type="match status" value="2"/>
</dbReference>
<dbReference type="SUPFAM" id="SSF52913">
    <property type="entry name" value="RNA 3'-terminal phosphate cyclase, RPTC, insert domain"/>
    <property type="match status" value="1"/>
</dbReference>
<dbReference type="PROSITE" id="PS01287">
    <property type="entry name" value="RTC"/>
    <property type="match status" value="1"/>
</dbReference>